<evidence type="ECO:0000255" key="1"/>
<evidence type="ECO:0000255" key="2">
    <source>
        <dbReference type="PROSITE-ProRule" id="PRU00434"/>
    </source>
</evidence>
<evidence type="ECO:0000255" key="3">
    <source>
        <dbReference type="PROSITE-ProRule" id="PRU00441"/>
    </source>
</evidence>
<evidence type="ECO:0000305" key="4"/>
<sequence length="1548" mass="172236">MVDNGHVTIAMADLGTVVEIAQVRCQQEAQRKFAEQLDELWGGEPAYTPTVEDQASWFQQLYYGWIGDYIYKAAAGNITEADLPPPTRSTRTYHIGRKLSRQAHADIDASRRWQGYIGCEVVYKSEAEAKGVLRWVGHLQQSDYPRSLVAGVEWRMPPRHRRLAVLGSAAALHNGVVHGERLFWPHEDNYLCSCEPVEQLYVKSKYNLIPPRPPPSPDLLRTLFKVHWYHVWAQILPKLLSDVTALMLPVLLEYFVKYLNADNATWGWGLGLALTIFLTNVIQSCSAHKYDHISIRTAALFETSSMALLFEKCFTVSRRSLQRPDMSVGRIMNMVGNDVDNIGSLNWYVMYFWSAPLQLVLCLLLLIRLVGWLRVPGMAVLFVTLPLQAVISKHVQDVSERMASVVDLRIKRTNELLSGVRIVKFMGWEPVFLARIQDARSRELRCLRDVHVANVFFMFVNDATPTLVIAVVFILYHVSGKVLKPEVVFPTIALLNTMRVSFFMIPIIISSILQCFVSAKRVTAFIECPDTHSQVQDIASIDVPDAAAIFKGASIHTYLPVKLPRCKSRLTAMQRSTLWFRRRGVPETEWYEVDSPDASASSLAVHSTTVHMGSTQTVITDSDGAAGEDEKGEVEEGDREYYQLVSKELLRNVSLTIPKGKLTMVIGSTGSGKSTLLGALMGEYSVESGELWAERSIAYVPQQAWIMNATLRGNILFFDEERAEDLQDVIRCCQLEADLAQFCGGLDTEIGEMGVNLSGGQKARVSLARAVYANRDVYLLDDPLSALDAHVGQRIVQDVILGRLRGKTRVLATHQIHLLPLADYIVVLQHGSIVFAGDFAAFSATALEETLRGELKGSKDVESCSSDVDTESATAETAPYVAKAKGLNAEQETSLAGGEDPLRSDVEAGRLMTTEEKATGKVPWSTYVAYLKSCGGLEAWGCLLATFALTECVTAASSVWLSIWSTGSLMWSADTYLYVYLFIVFLEIFGSPLRFFLCYYLIRIGSRNMHRDLLESIGVARMSFFDTTPVGRVLNRFTKDMSILDNTLNDGYLYLLEYFFSMCSTVIIMVVVQPFVLVAIVPCVYSYYKLMQVYNASNRETRRIKSIAHSPVFTLLEESLQGQRTIATYGKLHLVLQEALGRLDVVYSALYMQNVSNRWLGVRLEFLSCVVTFMVAFIGVIGKMEGASSQNIGLISLSLTMSMTLTETLNWLVRQVAMVEANMNSVERVLHYTQEVEHEHVPEMGELVAQLVRSESGRGANVTETVVIESAGAASSALHPVQAGSLVLEGVQMRYREGLPLVLRGVSFQIAPREKVGIVGRTGSGKSTLLLTFMRMVEVCGGVIHVNGREMSAYGLRDVRRHFSMIPQDPVLFDGTVRQNVDPFLEASSAEVWAALELVGLRERVASESEGIDSRVLEGGSNYSVGQRQLMCMARALLKRGSGFILMDEATANIDPALDRQIQATVMSAFSAYTVITIAHRLHTVAQYDKIIVMDHGVVAEMGSPRELVMNHQSMFHSMVESLGSRGSKDFYELLMGRRIVQPAVLSD</sequence>
<keyword id="KW-0046">Antibiotic resistance</keyword>
<keyword id="KW-0067">ATP-binding</keyword>
<keyword id="KW-0325">Glycoprotein</keyword>
<keyword id="KW-0472">Membrane</keyword>
<keyword id="KW-0547">Nucleotide-binding</keyword>
<keyword id="KW-0677">Repeat</keyword>
<keyword id="KW-1278">Translocase</keyword>
<keyword id="KW-0812">Transmembrane</keyword>
<keyword id="KW-1133">Transmembrane helix</keyword>
<keyword id="KW-0813">Transport</keyword>
<dbReference type="EC" id="7.6.2.2"/>
<dbReference type="EMBL" id="X17154">
    <property type="protein sequence ID" value="CAA35038.1"/>
    <property type="molecule type" value="Genomic_DNA"/>
</dbReference>
<dbReference type="PIR" id="S09248">
    <property type="entry name" value="DVLNS"/>
</dbReference>
<dbReference type="SMR" id="P21441"/>
<dbReference type="TCDB" id="3.A.1.208.6">
    <property type="family name" value="the atp-binding cassette (abc) superfamily"/>
</dbReference>
<dbReference type="GlyCosmos" id="P21441">
    <property type="glycosylation" value="3 sites, No reported glycans"/>
</dbReference>
<dbReference type="VEuPathDB" id="TriTrypDB:LtaPh_2303061"/>
<dbReference type="BioCyc" id="MetaCyc:MONOMER-21693"/>
<dbReference type="GO" id="GO:0016020">
    <property type="term" value="C:membrane"/>
    <property type="evidence" value="ECO:0007669"/>
    <property type="project" value="UniProtKB-SubCell"/>
</dbReference>
<dbReference type="GO" id="GO:0008559">
    <property type="term" value="F:ABC-type xenobiotic transporter activity"/>
    <property type="evidence" value="ECO:0007669"/>
    <property type="project" value="UniProtKB-EC"/>
</dbReference>
<dbReference type="GO" id="GO:0005524">
    <property type="term" value="F:ATP binding"/>
    <property type="evidence" value="ECO:0007669"/>
    <property type="project" value="UniProtKB-KW"/>
</dbReference>
<dbReference type="GO" id="GO:0016887">
    <property type="term" value="F:ATP hydrolysis activity"/>
    <property type="evidence" value="ECO:0007669"/>
    <property type="project" value="InterPro"/>
</dbReference>
<dbReference type="GO" id="GO:0046677">
    <property type="term" value="P:response to antibiotic"/>
    <property type="evidence" value="ECO:0007669"/>
    <property type="project" value="UniProtKB-KW"/>
</dbReference>
<dbReference type="CDD" id="cd18579">
    <property type="entry name" value="ABC_6TM_ABCC_D1"/>
    <property type="match status" value="1"/>
</dbReference>
<dbReference type="CDD" id="cd18580">
    <property type="entry name" value="ABC_6TM_ABCC_D2"/>
    <property type="match status" value="1"/>
</dbReference>
<dbReference type="CDD" id="cd03250">
    <property type="entry name" value="ABCC_MRP_domain1"/>
    <property type="match status" value="1"/>
</dbReference>
<dbReference type="CDD" id="cd03244">
    <property type="entry name" value="ABCC_MRP_domain2"/>
    <property type="match status" value="1"/>
</dbReference>
<dbReference type="FunFam" id="1.20.1560.10:FF:000082">
    <property type="entry name" value="ABC transporter, multidrug resistance associated protein"/>
    <property type="match status" value="1"/>
</dbReference>
<dbReference type="FunFam" id="3.40.50.300:FF:000630">
    <property type="entry name" value="ATP-binding cassette (ABC) transporter, putative"/>
    <property type="match status" value="1"/>
</dbReference>
<dbReference type="FunFam" id="3.40.50.300:FF:002055">
    <property type="entry name" value="ATP-binding cassette protein subfamily C, member 1"/>
    <property type="match status" value="1"/>
</dbReference>
<dbReference type="FunFam" id="1.20.1560.10:FF:000010">
    <property type="entry name" value="Multidrug resistance-associated ABC transporter"/>
    <property type="match status" value="1"/>
</dbReference>
<dbReference type="Gene3D" id="1.20.1560.10">
    <property type="entry name" value="ABC transporter type 1, transmembrane domain"/>
    <property type="match status" value="2"/>
</dbReference>
<dbReference type="Gene3D" id="3.40.50.300">
    <property type="entry name" value="P-loop containing nucleotide triphosphate hydrolases"/>
    <property type="match status" value="2"/>
</dbReference>
<dbReference type="InterPro" id="IPR003593">
    <property type="entry name" value="AAA+_ATPase"/>
</dbReference>
<dbReference type="InterPro" id="IPR011527">
    <property type="entry name" value="ABC1_TM_dom"/>
</dbReference>
<dbReference type="InterPro" id="IPR036640">
    <property type="entry name" value="ABC1_TM_sf"/>
</dbReference>
<dbReference type="InterPro" id="IPR003439">
    <property type="entry name" value="ABC_transporter-like_ATP-bd"/>
</dbReference>
<dbReference type="InterPro" id="IPR017871">
    <property type="entry name" value="ABC_transporter-like_CS"/>
</dbReference>
<dbReference type="InterPro" id="IPR050173">
    <property type="entry name" value="ABC_transporter_C-like"/>
</dbReference>
<dbReference type="InterPro" id="IPR044746">
    <property type="entry name" value="ABCC_6TM_D1"/>
</dbReference>
<dbReference type="InterPro" id="IPR044726">
    <property type="entry name" value="ABCC_6TM_D2"/>
</dbReference>
<dbReference type="InterPro" id="IPR000938">
    <property type="entry name" value="CAP-Gly_domain"/>
</dbReference>
<dbReference type="InterPro" id="IPR027417">
    <property type="entry name" value="P-loop_NTPase"/>
</dbReference>
<dbReference type="PANTHER" id="PTHR24223">
    <property type="entry name" value="ATP-BINDING CASSETTE SUB-FAMILY C"/>
    <property type="match status" value="1"/>
</dbReference>
<dbReference type="PANTHER" id="PTHR24223:SF273">
    <property type="entry name" value="MULTIDRUG RESISTANCE PROTEIN E"/>
    <property type="match status" value="1"/>
</dbReference>
<dbReference type="Pfam" id="PF00664">
    <property type="entry name" value="ABC_membrane"/>
    <property type="match status" value="2"/>
</dbReference>
<dbReference type="Pfam" id="PF00005">
    <property type="entry name" value="ABC_tran"/>
    <property type="match status" value="2"/>
</dbReference>
<dbReference type="SMART" id="SM00382">
    <property type="entry name" value="AAA"/>
    <property type="match status" value="2"/>
</dbReference>
<dbReference type="SMART" id="SM01052">
    <property type="entry name" value="CAP_GLY"/>
    <property type="match status" value="1"/>
</dbReference>
<dbReference type="SUPFAM" id="SSF90123">
    <property type="entry name" value="ABC transporter transmembrane region"/>
    <property type="match status" value="2"/>
</dbReference>
<dbReference type="SUPFAM" id="SSF52540">
    <property type="entry name" value="P-loop containing nucleoside triphosphate hydrolases"/>
    <property type="match status" value="2"/>
</dbReference>
<dbReference type="PROSITE" id="PS50929">
    <property type="entry name" value="ABC_TM1F"/>
    <property type="match status" value="2"/>
</dbReference>
<dbReference type="PROSITE" id="PS00211">
    <property type="entry name" value="ABC_TRANSPORTER_1"/>
    <property type="match status" value="2"/>
</dbReference>
<dbReference type="PROSITE" id="PS50893">
    <property type="entry name" value="ABC_TRANSPORTER_2"/>
    <property type="match status" value="2"/>
</dbReference>
<protein>
    <recommendedName>
        <fullName>Multidrug resistance protein</fullName>
        <ecNumber>7.6.2.2</ecNumber>
    </recommendedName>
    <alternativeName>
        <fullName>P-glycoprotein</fullName>
    </alternativeName>
</protein>
<proteinExistence type="inferred from homology"/>
<name>MDR_LEITA</name>
<feature type="chain" id="PRO_0000093346" description="Multidrug resistance protein">
    <location>
        <begin position="1"/>
        <end position="1548"/>
    </location>
</feature>
<feature type="topological domain" description="Cytoplasmic" evidence="1">
    <location>
        <begin position="1"/>
        <end position="238"/>
    </location>
</feature>
<feature type="transmembrane region" description="Helical" evidence="3">
    <location>
        <begin position="239"/>
        <end position="256"/>
    </location>
</feature>
<feature type="transmembrane region" description="Helical" evidence="3">
    <location>
        <begin position="266"/>
        <end position="287"/>
    </location>
</feature>
<feature type="transmembrane region" description="Helical" evidence="3">
    <location>
        <begin position="349"/>
        <end position="367"/>
    </location>
</feature>
<feature type="transmembrane region" description="Helical" evidence="3">
    <location>
        <begin position="375"/>
        <end position="392"/>
    </location>
</feature>
<feature type="transmembrane region" description="Helical" evidence="3">
    <location>
        <begin position="463"/>
        <end position="480"/>
    </location>
</feature>
<feature type="transmembrane region" description="Helical" evidence="3">
    <location>
        <begin position="500"/>
        <end position="519"/>
    </location>
</feature>
<feature type="topological domain" description="Cytoplasmic" evidence="1">
    <location>
        <begin position="520"/>
        <end position="932"/>
    </location>
</feature>
<feature type="transmembrane region" description="Helical" evidence="3">
    <location>
        <begin position="933"/>
        <end position="950"/>
    </location>
</feature>
<feature type="transmembrane region" description="Helical" evidence="3">
    <location>
        <begin position="975"/>
        <end position="993"/>
    </location>
</feature>
<feature type="transmembrane region" description="Helical" evidence="3">
    <location>
        <begin position="1051"/>
        <end position="1070"/>
    </location>
</feature>
<feature type="transmembrane region" description="Helical" evidence="3">
    <location>
        <begin position="1072"/>
        <end position="1088"/>
    </location>
</feature>
<feature type="transmembrane region" description="Helical" evidence="3">
    <location>
        <begin position="1164"/>
        <end position="1182"/>
    </location>
</feature>
<feature type="transmembrane region" description="Helical" evidence="3">
    <location>
        <begin position="1186"/>
        <end position="1205"/>
    </location>
</feature>
<feature type="topological domain" description="Cytoplasmic" evidence="1">
    <location>
        <begin position="1206"/>
        <end position="1548"/>
    </location>
</feature>
<feature type="domain" description="ABC transmembrane type-1 1" evidence="3">
    <location>
        <begin position="231"/>
        <end position="514"/>
    </location>
</feature>
<feature type="domain" description="ABC transporter 1" evidence="2">
    <location>
        <begin position="634"/>
        <end position="855"/>
    </location>
</feature>
<feature type="domain" description="ABC transmembrane type-1 2" evidence="3">
    <location>
        <begin position="940"/>
        <end position="1221"/>
    </location>
</feature>
<feature type="domain" description="ABC transporter 2" evidence="2">
    <location>
        <begin position="1286"/>
        <end position="1521"/>
    </location>
</feature>
<feature type="binding site" evidence="2">
    <location>
        <begin position="667"/>
        <end position="674"/>
    </location>
    <ligand>
        <name>ATP</name>
        <dbReference type="ChEBI" id="CHEBI:30616"/>
        <label>1</label>
    </ligand>
</feature>
<feature type="binding site" evidence="2">
    <location>
        <begin position="1320"/>
        <end position="1327"/>
    </location>
    <ligand>
        <name>ATP</name>
        <dbReference type="ChEBI" id="CHEBI:30616"/>
        <label>2</label>
    </ligand>
</feature>
<feature type="glycosylation site" description="N-linked (GlcNAc...) asparagine" evidence="1">
    <location>
        <position position="263"/>
    </location>
</feature>
<feature type="glycosylation site" description="N-linked (GlcNAc...) asparagine" evidence="1">
    <location>
        <position position="1095"/>
    </location>
</feature>
<feature type="glycosylation site" description="N-linked (GlcNAc...) asparagine" evidence="1">
    <location>
        <position position="1154"/>
    </location>
</feature>
<gene>
    <name type="primary">PGPA</name>
</gene>
<reference key="1">
    <citation type="journal article" date="1990" name="EMBO J.">
        <title>The amplified H circle of methotrexate-resistant Leishmania tarentolae contains a novel P-glycoprotein gene.</title>
        <authorList>
            <person name="Ouellette M."/>
            <person name="Fase-Fowler F."/>
            <person name="Borst P."/>
        </authorList>
    </citation>
    <scope>NUCLEOTIDE SEQUENCE [GENOMIC DNA]</scope>
</reference>
<organism>
    <name type="scientific">Leishmania tarentolae</name>
    <name type="common">Sauroleishmania tarentolae</name>
    <dbReference type="NCBI Taxonomy" id="5689"/>
    <lineage>
        <taxon>Eukaryota</taxon>
        <taxon>Discoba</taxon>
        <taxon>Euglenozoa</taxon>
        <taxon>Kinetoplastea</taxon>
        <taxon>Metakinetoplastina</taxon>
        <taxon>Trypanosomatida</taxon>
        <taxon>Trypanosomatidae</taxon>
        <taxon>Leishmaniinae</taxon>
        <taxon>Leishmania</taxon>
        <taxon>lizard Leishmania</taxon>
    </lineage>
</organism>
<accession>P21441</accession>
<comment type="catalytic activity">
    <reaction>
        <text>ATP + H2O + xenobioticSide 1 = ADP + phosphate + xenobioticSide 2.</text>
        <dbReference type="EC" id="7.6.2.2"/>
    </reaction>
</comment>
<comment type="subcellular location">
    <subcellularLocation>
        <location>Membrane</location>
        <topology>Multi-pass membrane protein</topology>
    </subcellularLocation>
</comment>
<comment type="miscellaneous">
    <text>In this organism, this protein is encoded by a gene, located in 'H circle', a 68 kb duplex DNA circle containing a 30 kb inverted repeat. Acquired resistance to methotrexate in the organism is associated with the amplification of h circles with increasing level of LTPGPA gene transcription.</text>
</comment>
<comment type="similarity">
    <text evidence="4">Belongs to the ABC transporter superfamily. ABCB family. Multidrug resistance exporter (TC 3.A.1.201) subfamily.</text>
</comment>